<gene>
    <name type="primary">rpoN</name>
</gene>
<proteinExistence type="inferred from homology"/>
<accession>P77998</accession>
<protein>
    <recommendedName>
        <fullName>RNA polymerase sigma-54 factor</fullName>
    </recommendedName>
</protein>
<feature type="chain" id="PRO_0000205547" description="RNA polymerase sigma-54 factor">
    <location>
        <begin position="1"/>
        <end position="479"/>
    </location>
</feature>
<feature type="DNA-binding region" description="H-T-H motif" evidence="1">
    <location>
        <begin position="368"/>
        <end position="387"/>
    </location>
</feature>
<feature type="region of interest" description="Disordered" evidence="2">
    <location>
        <begin position="59"/>
        <end position="115"/>
    </location>
</feature>
<feature type="short sequence motif" description="RPON box">
    <location>
        <begin position="456"/>
        <end position="464"/>
    </location>
</feature>
<feature type="compositionally biased region" description="Basic and acidic residues" evidence="2">
    <location>
        <begin position="73"/>
        <end position="82"/>
    </location>
</feature>
<name>RP54_XANEU</name>
<comment type="function">
    <text>Sigma factors are initiation factors that promote the attachment of RNA polymerase to specific initiation sites and are then released. This sigma factor is responsible for the expression of the nitrogen utilization genes.</text>
</comment>
<comment type="similarity">
    <text evidence="3">Belongs to the sigma-54 factor family.</text>
</comment>
<reference key="1">
    <citation type="journal article" date="1996" name="Mol. Plant Microbe Interact.">
        <title>The rpoN gene of Xanthomonas campestris pv. vesicatoria is not required for pathogenicity.</title>
        <authorList>
            <person name="Horns T."/>
            <person name="Bonas U."/>
        </authorList>
    </citation>
    <scope>NUCLEOTIDE SEQUENCE [GENOMIC DNA]</scope>
</reference>
<keyword id="KW-0238">DNA-binding</keyword>
<keyword id="KW-0240">DNA-directed RNA polymerase</keyword>
<keyword id="KW-0548">Nucleotidyltransferase</keyword>
<keyword id="KW-0731">Sigma factor</keyword>
<keyword id="KW-0804">Transcription</keyword>
<keyword id="KW-0805">Transcription regulation</keyword>
<keyword id="KW-0808">Transferase</keyword>
<evidence type="ECO:0000255" key="1"/>
<evidence type="ECO:0000256" key="2">
    <source>
        <dbReference type="SAM" id="MobiDB-lite"/>
    </source>
</evidence>
<evidence type="ECO:0000305" key="3"/>
<organism>
    <name type="scientific">Xanthomonas euvesicatoria</name>
    <dbReference type="NCBI Taxonomy" id="456327"/>
    <lineage>
        <taxon>Bacteria</taxon>
        <taxon>Pseudomonadati</taxon>
        <taxon>Pseudomonadota</taxon>
        <taxon>Gammaproteobacteria</taxon>
        <taxon>Lysobacterales</taxon>
        <taxon>Lysobacteraceae</taxon>
        <taxon>Xanthomonas</taxon>
    </lineage>
</organism>
<dbReference type="EMBL" id="U67179">
    <property type="protein sequence ID" value="AAB08068.1"/>
    <property type="molecule type" value="Genomic_DNA"/>
</dbReference>
<dbReference type="RefSeq" id="WP_039418519.1">
    <property type="nucleotide sequence ID" value="NZ_QFAL01000083.1"/>
</dbReference>
<dbReference type="SMR" id="P77998"/>
<dbReference type="PATRIC" id="fig|456327.29.peg.4661"/>
<dbReference type="GO" id="GO:0000428">
    <property type="term" value="C:DNA-directed RNA polymerase complex"/>
    <property type="evidence" value="ECO:0007669"/>
    <property type="project" value="UniProtKB-KW"/>
</dbReference>
<dbReference type="GO" id="GO:0003677">
    <property type="term" value="F:DNA binding"/>
    <property type="evidence" value="ECO:0007669"/>
    <property type="project" value="UniProtKB-KW"/>
</dbReference>
<dbReference type="GO" id="GO:0001216">
    <property type="term" value="F:DNA-binding transcription activator activity"/>
    <property type="evidence" value="ECO:0007669"/>
    <property type="project" value="InterPro"/>
</dbReference>
<dbReference type="GO" id="GO:0016779">
    <property type="term" value="F:nucleotidyltransferase activity"/>
    <property type="evidence" value="ECO:0007669"/>
    <property type="project" value="UniProtKB-KW"/>
</dbReference>
<dbReference type="GO" id="GO:0016987">
    <property type="term" value="F:sigma factor activity"/>
    <property type="evidence" value="ECO:0007669"/>
    <property type="project" value="UniProtKB-KW"/>
</dbReference>
<dbReference type="GO" id="GO:0006352">
    <property type="term" value="P:DNA-templated transcription initiation"/>
    <property type="evidence" value="ECO:0007669"/>
    <property type="project" value="InterPro"/>
</dbReference>
<dbReference type="Gene3D" id="1.10.10.60">
    <property type="entry name" value="Homeodomain-like"/>
    <property type="match status" value="1"/>
</dbReference>
<dbReference type="Gene3D" id="1.10.10.1330">
    <property type="entry name" value="RNA polymerase sigma-54 factor, core-binding domain"/>
    <property type="match status" value="1"/>
</dbReference>
<dbReference type="InterPro" id="IPR000394">
    <property type="entry name" value="RNA_pol_sigma_54"/>
</dbReference>
<dbReference type="InterPro" id="IPR007046">
    <property type="entry name" value="RNA_pol_sigma_54_core-bd"/>
</dbReference>
<dbReference type="InterPro" id="IPR007634">
    <property type="entry name" value="RNA_pol_sigma_54_DNA-bd"/>
</dbReference>
<dbReference type="InterPro" id="IPR038709">
    <property type="entry name" value="RpoN_core-bd_sf"/>
</dbReference>
<dbReference type="NCBIfam" id="NF004595">
    <property type="entry name" value="PRK05932.1-2"/>
    <property type="match status" value="1"/>
</dbReference>
<dbReference type="NCBIfam" id="NF009118">
    <property type="entry name" value="PRK12469.1"/>
    <property type="match status" value="1"/>
</dbReference>
<dbReference type="NCBIfam" id="TIGR02395">
    <property type="entry name" value="rpoN_sigma"/>
    <property type="match status" value="1"/>
</dbReference>
<dbReference type="PANTHER" id="PTHR32248">
    <property type="entry name" value="RNA POLYMERASE SIGMA-54 FACTOR"/>
    <property type="match status" value="1"/>
</dbReference>
<dbReference type="PANTHER" id="PTHR32248:SF4">
    <property type="entry name" value="RNA POLYMERASE SIGMA-54 FACTOR"/>
    <property type="match status" value="1"/>
</dbReference>
<dbReference type="Pfam" id="PF00309">
    <property type="entry name" value="Sigma54_AID"/>
    <property type="match status" value="1"/>
</dbReference>
<dbReference type="Pfam" id="PF04963">
    <property type="entry name" value="Sigma54_CBD"/>
    <property type="match status" value="1"/>
</dbReference>
<dbReference type="Pfam" id="PF04552">
    <property type="entry name" value="Sigma54_DBD"/>
    <property type="match status" value="1"/>
</dbReference>
<dbReference type="PIRSF" id="PIRSF000774">
    <property type="entry name" value="RpoN"/>
    <property type="match status" value="1"/>
</dbReference>
<dbReference type="PRINTS" id="PR00045">
    <property type="entry name" value="SIGMA54FCT"/>
</dbReference>
<dbReference type="PROSITE" id="PS00717">
    <property type="entry name" value="SIGMA54_1"/>
    <property type="match status" value="1"/>
</dbReference>
<dbReference type="PROSITE" id="PS00718">
    <property type="entry name" value="SIGMA54_2"/>
    <property type="match status" value="1"/>
</dbReference>
<dbReference type="PROSITE" id="PS50044">
    <property type="entry name" value="SIGMA54_3"/>
    <property type="match status" value="1"/>
</dbReference>
<sequence>MKARLQTSLGQQLVMTPQLRQAIKLLQMSTTELEVEIAEAVETNPLLEWADEAAHAASDIAVDSSPSASTEQPQREEVAPAERDEDWSQDELQWTGSGSGGSFDDDESGDAAERVAESETLADHLLWQLHLSPLSPRDRQIGAMLIDALDEDGYLREPLSAILETLALGAAVDEADVLTVLHQIQRFDPVGVGARTLGECLALQLGVLDADTPGRELALQIVAGPLERLPRSGVAGLAHELKRSTADVEQAVQLVRSLDPRPGKQIGDLSQDTYVVPDCVIWRQRGVWRAALAGRAQPKVTIHRGYENLIRSCGESDAGYLRGQLQEARWLLKSLEARGETLLRVVRCLLEHQAGFLEFGAQALRPLTLREIAGELGLHESTISRAIARKYVRTPRGTIALRAFFASGIDTDSGGEASSTAIQAMIRRLIDAENPRKPLSDAKLADLLKTSGVPVARRTVAKYREAMNISASHERVRIA</sequence>